<evidence type="ECO:0000255" key="1">
    <source>
        <dbReference type="HAMAP-Rule" id="MF_00015"/>
    </source>
</evidence>
<feature type="chain" id="PRO_0000170055" description="LexA repressor">
    <location>
        <begin position="1"/>
        <end position="202"/>
    </location>
</feature>
<feature type="DNA-binding region" description="H-T-H motif" evidence="1">
    <location>
        <begin position="28"/>
        <end position="48"/>
    </location>
</feature>
<feature type="active site" description="For autocatalytic cleavage activity" evidence="1">
    <location>
        <position position="120"/>
    </location>
</feature>
<feature type="active site" description="For autocatalytic cleavage activity" evidence="1">
    <location>
        <position position="157"/>
    </location>
</feature>
<feature type="site" description="Cleavage; by autolysis" evidence="1">
    <location>
        <begin position="85"/>
        <end position="86"/>
    </location>
</feature>
<name>LEXA_METCA</name>
<comment type="function">
    <text evidence="1">Represses a number of genes involved in the response to DNA damage (SOS response), including recA and lexA. In the presence of single-stranded DNA, RecA interacts with LexA causing an autocatalytic cleavage which disrupts the DNA-binding part of LexA, leading to derepression of the SOS regulon and eventually DNA repair.</text>
</comment>
<comment type="catalytic activity">
    <reaction evidence="1">
        <text>Hydrolysis of Ala-|-Gly bond in repressor LexA.</text>
        <dbReference type="EC" id="3.4.21.88"/>
    </reaction>
</comment>
<comment type="subunit">
    <text evidence="1">Homodimer.</text>
</comment>
<comment type="similarity">
    <text evidence="1">Belongs to the peptidase S24 family.</text>
</comment>
<protein>
    <recommendedName>
        <fullName evidence="1">LexA repressor</fullName>
        <ecNumber evidence="1">3.4.21.88</ecNumber>
    </recommendedName>
</protein>
<keyword id="KW-0068">Autocatalytic cleavage</keyword>
<keyword id="KW-0227">DNA damage</keyword>
<keyword id="KW-0234">DNA repair</keyword>
<keyword id="KW-0235">DNA replication</keyword>
<keyword id="KW-0238">DNA-binding</keyword>
<keyword id="KW-0378">Hydrolase</keyword>
<keyword id="KW-1185">Reference proteome</keyword>
<keyword id="KW-0678">Repressor</keyword>
<keyword id="KW-0742">SOS response</keyword>
<keyword id="KW-0804">Transcription</keyword>
<keyword id="KW-0805">Transcription regulation</keyword>
<accession>Q605V8</accession>
<dbReference type="EC" id="3.4.21.88" evidence="1"/>
<dbReference type="EMBL" id="AE017282">
    <property type="protein sequence ID" value="AAU91609.1"/>
    <property type="molecule type" value="Genomic_DNA"/>
</dbReference>
<dbReference type="RefSeq" id="WP_010961403.1">
    <property type="nucleotide sequence ID" value="NC_002977.6"/>
</dbReference>
<dbReference type="SMR" id="Q605V8"/>
<dbReference type="STRING" id="243233.MCA2167"/>
<dbReference type="MEROPS" id="S24.001"/>
<dbReference type="GeneID" id="88224385"/>
<dbReference type="KEGG" id="mca:MCA2167"/>
<dbReference type="eggNOG" id="COG1974">
    <property type="taxonomic scope" value="Bacteria"/>
</dbReference>
<dbReference type="HOGENOM" id="CLU_066192_45_3_6"/>
<dbReference type="Proteomes" id="UP000006821">
    <property type="component" value="Chromosome"/>
</dbReference>
<dbReference type="GO" id="GO:0003677">
    <property type="term" value="F:DNA binding"/>
    <property type="evidence" value="ECO:0007669"/>
    <property type="project" value="UniProtKB-UniRule"/>
</dbReference>
<dbReference type="GO" id="GO:0004252">
    <property type="term" value="F:serine-type endopeptidase activity"/>
    <property type="evidence" value="ECO:0007669"/>
    <property type="project" value="UniProtKB-UniRule"/>
</dbReference>
<dbReference type="GO" id="GO:0006281">
    <property type="term" value="P:DNA repair"/>
    <property type="evidence" value="ECO:0007669"/>
    <property type="project" value="UniProtKB-UniRule"/>
</dbReference>
<dbReference type="GO" id="GO:0006260">
    <property type="term" value="P:DNA replication"/>
    <property type="evidence" value="ECO:0007669"/>
    <property type="project" value="UniProtKB-UniRule"/>
</dbReference>
<dbReference type="GO" id="GO:0045892">
    <property type="term" value="P:negative regulation of DNA-templated transcription"/>
    <property type="evidence" value="ECO:0007669"/>
    <property type="project" value="UniProtKB-UniRule"/>
</dbReference>
<dbReference type="GO" id="GO:0006508">
    <property type="term" value="P:proteolysis"/>
    <property type="evidence" value="ECO:0007669"/>
    <property type="project" value="InterPro"/>
</dbReference>
<dbReference type="GO" id="GO:0009432">
    <property type="term" value="P:SOS response"/>
    <property type="evidence" value="ECO:0007669"/>
    <property type="project" value="UniProtKB-UniRule"/>
</dbReference>
<dbReference type="CDD" id="cd06529">
    <property type="entry name" value="S24_LexA-like"/>
    <property type="match status" value="1"/>
</dbReference>
<dbReference type="FunFam" id="1.10.10.10:FF:000009">
    <property type="entry name" value="LexA repressor"/>
    <property type="match status" value="1"/>
</dbReference>
<dbReference type="FunFam" id="2.10.109.10:FF:000001">
    <property type="entry name" value="LexA repressor"/>
    <property type="match status" value="1"/>
</dbReference>
<dbReference type="Gene3D" id="2.10.109.10">
    <property type="entry name" value="Umud Fragment, subunit A"/>
    <property type="match status" value="1"/>
</dbReference>
<dbReference type="Gene3D" id="1.10.10.10">
    <property type="entry name" value="Winged helix-like DNA-binding domain superfamily/Winged helix DNA-binding domain"/>
    <property type="match status" value="1"/>
</dbReference>
<dbReference type="HAMAP" id="MF_00015">
    <property type="entry name" value="LexA"/>
    <property type="match status" value="1"/>
</dbReference>
<dbReference type="InterPro" id="IPR006200">
    <property type="entry name" value="LexA"/>
</dbReference>
<dbReference type="InterPro" id="IPR039418">
    <property type="entry name" value="LexA-like"/>
</dbReference>
<dbReference type="InterPro" id="IPR036286">
    <property type="entry name" value="LexA/Signal_pep-like_sf"/>
</dbReference>
<dbReference type="InterPro" id="IPR006199">
    <property type="entry name" value="LexA_DNA-bd_dom"/>
</dbReference>
<dbReference type="InterPro" id="IPR050077">
    <property type="entry name" value="LexA_repressor"/>
</dbReference>
<dbReference type="InterPro" id="IPR006197">
    <property type="entry name" value="Peptidase_S24_LexA"/>
</dbReference>
<dbReference type="InterPro" id="IPR015927">
    <property type="entry name" value="Peptidase_S24_S26A/B/C"/>
</dbReference>
<dbReference type="InterPro" id="IPR036388">
    <property type="entry name" value="WH-like_DNA-bd_sf"/>
</dbReference>
<dbReference type="InterPro" id="IPR036390">
    <property type="entry name" value="WH_DNA-bd_sf"/>
</dbReference>
<dbReference type="NCBIfam" id="TIGR00498">
    <property type="entry name" value="lexA"/>
    <property type="match status" value="1"/>
</dbReference>
<dbReference type="PANTHER" id="PTHR33516">
    <property type="entry name" value="LEXA REPRESSOR"/>
    <property type="match status" value="1"/>
</dbReference>
<dbReference type="PANTHER" id="PTHR33516:SF2">
    <property type="entry name" value="LEXA REPRESSOR-RELATED"/>
    <property type="match status" value="1"/>
</dbReference>
<dbReference type="Pfam" id="PF01726">
    <property type="entry name" value="LexA_DNA_bind"/>
    <property type="match status" value="1"/>
</dbReference>
<dbReference type="Pfam" id="PF00717">
    <property type="entry name" value="Peptidase_S24"/>
    <property type="match status" value="1"/>
</dbReference>
<dbReference type="PRINTS" id="PR00726">
    <property type="entry name" value="LEXASERPTASE"/>
</dbReference>
<dbReference type="SUPFAM" id="SSF51306">
    <property type="entry name" value="LexA/Signal peptidase"/>
    <property type="match status" value="1"/>
</dbReference>
<dbReference type="SUPFAM" id="SSF46785">
    <property type="entry name" value="Winged helix' DNA-binding domain"/>
    <property type="match status" value="1"/>
</dbReference>
<reference key="1">
    <citation type="journal article" date="2004" name="PLoS Biol.">
        <title>Genomic insights into methanotrophy: the complete genome sequence of Methylococcus capsulatus (Bath).</title>
        <authorList>
            <person name="Ward N.L."/>
            <person name="Larsen O."/>
            <person name="Sakwa J."/>
            <person name="Bruseth L."/>
            <person name="Khouri H.M."/>
            <person name="Durkin A.S."/>
            <person name="Dimitrov G."/>
            <person name="Jiang L."/>
            <person name="Scanlan D."/>
            <person name="Kang K.H."/>
            <person name="Lewis M.R."/>
            <person name="Nelson K.E."/>
            <person name="Methe B.A."/>
            <person name="Wu M."/>
            <person name="Heidelberg J.F."/>
            <person name="Paulsen I.T."/>
            <person name="Fouts D.E."/>
            <person name="Ravel J."/>
            <person name="Tettelin H."/>
            <person name="Ren Q."/>
            <person name="Read T.D."/>
            <person name="DeBoy R.T."/>
            <person name="Seshadri R."/>
            <person name="Salzberg S.L."/>
            <person name="Jensen H.B."/>
            <person name="Birkeland N.K."/>
            <person name="Nelson W.C."/>
            <person name="Dodson R.J."/>
            <person name="Grindhaug S.H."/>
            <person name="Holt I.E."/>
            <person name="Eidhammer I."/>
            <person name="Jonasen I."/>
            <person name="Vanaken S."/>
            <person name="Utterback T.R."/>
            <person name="Feldblyum T.V."/>
            <person name="Fraser C.M."/>
            <person name="Lillehaug J.R."/>
            <person name="Eisen J.A."/>
        </authorList>
    </citation>
    <scope>NUCLEOTIDE SEQUENCE [LARGE SCALE GENOMIC DNA]</scope>
    <source>
        <strain>ATCC 33009 / NCIMB 11132 / Bath</strain>
    </source>
</reference>
<gene>
    <name evidence="1" type="primary">lexA</name>
    <name type="ordered locus">MCA2167</name>
</gene>
<organism>
    <name type="scientific">Methylococcus capsulatus (strain ATCC 33009 / NCIMB 11132 / Bath)</name>
    <dbReference type="NCBI Taxonomy" id="243233"/>
    <lineage>
        <taxon>Bacteria</taxon>
        <taxon>Pseudomonadati</taxon>
        <taxon>Pseudomonadota</taxon>
        <taxon>Gammaproteobacteria</taxon>
        <taxon>Methylococcales</taxon>
        <taxon>Methylococcaceae</taxon>
        <taxon>Methylococcus</taxon>
    </lineage>
</organism>
<proteinExistence type="inferred from homology"/>
<sequence>MKPLTVRQREILDCIRRSVENEGFPPTIAEIARAIGVSSPHGVREQLRALERKGVIELIPSASRGIRLLARAEEPGLPLIGKVAAGRPLLTEAQVERYCQLGPELFEHKGDYLLRVQGMSMRDAGIIDGDLLVVQQAQEARSGQIVVVRLHDEVTVKRLRLEGALAYLEPANPEFSVIAVDPERQPLCIEGIVVGVIRTRVG</sequence>